<protein>
    <recommendedName>
        <fullName>Transmembrane protein C1orf162</fullName>
    </recommendedName>
</protein>
<accession>Q8NEQ5</accession>
<accession>Q5QNZ1</accession>
<organism>
    <name type="scientific">Homo sapiens</name>
    <name type="common">Human</name>
    <dbReference type="NCBI Taxonomy" id="9606"/>
    <lineage>
        <taxon>Eukaryota</taxon>
        <taxon>Metazoa</taxon>
        <taxon>Chordata</taxon>
        <taxon>Craniata</taxon>
        <taxon>Vertebrata</taxon>
        <taxon>Euteleostomi</taxon>
        <taxon>Mammalia</taxon>
        <taxon>Eutheria</taxon>
        <taxon>Euarchontoglires</taxon>
        <taxon>Primates</taxon>
        <taxon>Haplorrhini</taxon>
        <taxon>Catarrhini</taxon>
        <taxon>Hominidae</taxon>
        <taxon>Homo</taxon>
    </lineage>
</organism>
<gene>
    <name type="primary">C1orf162</name>
</gene>
<sequence length="155" mass="16886">MGGNGSTCKPDTERQGTLSTAAPTTSPAPCLSNHHNKKHLILAFCAGVLLTLLLIAFIFLIIKSYRKYRRERLPISPGPLLRWVPLLSGTMADHSKPQAPDPHSDPPAKLSSIPGESLTYASTTFKLSEEKSNHLAENHSADFDPIVYAQIKVTN</sequence>
<proteinExistence type="evidence at protein level"/>
<keyword id="KW-0025">Alternative splicing</keyword>
<keyword id="KW-0472">Membrane</keyword>
<keyword id="KW-0597">Phosphoprotein</keyword>
<keyword id="KW-1267">Proteomics identification</keyword>
<keyword id="KW-1185">Reference proteome</keyword>
<keyword id="KW-0812">Transmembrane</keyword>
<keyword id="KW-1133">Transmembrane helix</keyword>
<dbReference type="EMBL" id="AL390195">
    <property type="status" value="NOT_ANNOTATED_CDS"/>
    <property type="molecule type" value="Genomic_DNA"/>
</dbReference>
<dbReference type="EMBL" id="BC017973">
    <property type="protein sequence ID" value="AAH17973.1"/>
    <property type="molecule type" value="mRNA"/>
</dbReference>
<dbReference type="EMBL" id="BG545926">
    <property type="status" value="NOT_ANNOTATED_CDS"/>
    <property type="molecule type" value="mRNA"/>
</dbReference>
<dbReference type="CCDS" id="CCDS72837.1">
    <molecule id="Q8NEQ5-2"/>
</dbReference>
<dbReference type="CCDS" id="CCDS837.1">
    <molecule id="Q8NEQ5-1"/>
</dbReference>
<dbReference type="RefSeq" id="NP_001287763.1">
    <molecule id="Q8NEQ5-2"/>
    <property type="nucleotide sequence ID" value="NM_001300834.2"/>
</dbReference>
<dbReference type="RefSeq" id="NP_777556.1">
    <molecule id="Q8NEQ5-1"/>
    <property type="nucleotide sequence ID" value="NM_174896.4"/>
</dbReference>
<dbReference type="RefSeq" id="XP_011539014.1">
    <property type="nucleotide sequence ID" value="XM_011540712.2"/>
</dbReference>
<dbReference type="RefSeq" id="XP_016855812.1">
    <property type="nucleotide sequence ID" value="XM_017000323.1"/>
</dbReference>
<dbReference type="RefSeq" id="XP_054190429.1">
    <molecule id="Q8NEQ5-1"/>
    <property type="nucleotide sequence ID" value="XM_054334454.1"/>
</dbReference>
<dbReference type="RefSeq" id="XP_054190430.1">
    <molecule id="Q8NEQ5-2"/>
    <property type="nucleotide sequence ID" value="XM_054334455.1"/>
</dbReference>
<dbReference type="SMR" id="Q8NEQ5"/>
<dbReference type="BioGRID" id="126110">
    <property type="interactions" value="8"/>
</dbReference>
<dbReference type="FunCoup" id="Q8NEQ5">
    <property type="interactions" value="3"/>
</dbReference>
<dbReference type="IntAct" id="Q8NEQ5">
    <property type="interactions" value="6"/>
</dbReference>
<dbReference type="MINT" id="Q8NEQ5"/>
<dbReference type="STRING" id="9606.ENSP00000344218"/>
<dbReference type="GlyGen" id="Q8NEQ5">
    <property type="glycosylation" value="1 site, 1 N-linked glycan (1 site)"/>
</dbReference>
<dbReference type="iPTMnet" id="Q8NEQ5"/>
<dbReference type="PhosphoSitePlus" id="Q8NEQ5"/>
<dbReference type="BioMuta" id="C1orf162"/>
<dbReference type="DMDM" id="74751257"/>
<dbReference type="MassIVE" id="Q8NEQ5"/>
<dbReference type="PaxDb" id="9606-ENSP00000344218"/>
<dbReference type="PeptideAtlas" id="Q8NEQ5"/>
<dbReference type="ProteomicsDB" id="73199">
    <molecule id="Q8NEQ5-1"/>
</dbReference>
<dbReference type="ProteomicsDB" id="73200">
    <molecule id="Q8NEQ5-2"/>
</dbReference>
<dbReference type="Antibodypedia" id="33811">
    <property type="antibodies" value="41 antibodies from 9 providers"/>
</dbReference>
<dbReference type="DNASU" id="128346"/>
<dbReference type="Ensembl" id="ENST00000343534.9">
    <molecule id="Q8NEQ5-1"/>
    <property type="protein sequence ID" value="ENSP00000344218.5"/>
    <property type="gene ID" value="ENSG00000143110.12"/>
</dbReference>
<dbReference type="Ensembl" id="ENST00000369718.4">
    <molecule id="Q8NEQ5-2"/>
    <property type="protein sequence ID" value="ENSP00000358732.3"/>
    <property type="gene ID" value="ENSG00000143110.12"/>
</dbReference>
<dbReference type="GeneID" id="128346"/>
<dbReference type="KEGG" id="hsa:128346"/>
<dbReference type="MANE-Select" id="ENST00000369718.4">
    <molecule id="Q8NEQ5-2"/>
    <property type="protein sequence ID" value="ENSP00000358732.3"/>
    <property type="RefSeq nucleotide sequence ID" value="NM_001300834.2"/>
    <property type="RefSeq protein sequence ID" value="NP_001287763.1"/>
</dbReference>
<dbReference type="UCSC" id="uc001ebe.4">
    <molecule id="Q8NEQ5-1"/>
    <property type="organism name" value="human"/>
</dbReference>
<dbReference type="AGR" id="HGNC:28344"/>
<dbReference type="CTD" id="128346"/>
<dbReference type="GeneCards" id="C1orf162"/>
<dbReference type="HGNC" id="HGNC:28344">
    <property type="gene designation" value="C1orf162"/>
</dbReference>
<dbReference type="HPA" id="ENSG00000143110">
    <property type="expression patterns" value="Tissue enhanced (bone marrow, lymphoid tissue)"/>
</dbReference>
<dbReference type="neXtProt" id="NX_Q8NEQ5"/>
<dbReference type="OpenTargets" id="ENSG00000143110"/>
<dbReference type="PharmGKB" id="PA142672413"/>
<dbReference type="VEuPathDB" id="HostDB:ENSG00000143110"/>
<dbReference type="eggNOG" id="ENOG502TE6S">
    <property type="taxonomic scope" value="Eukaryota"/>
</dbReference>
<dbReference type="GeneTree" id="ENSGT00390000015005"/>
<dbReference type="HOGENOM" id="CLU_136856_0_0_1"/>
<dbReference type="InParanoid" id="Q8NEQ5"/>
<dbReference type="OMA" id="MAGHSKP"/>
<dbReference type="OrthoDB" id="9451692at2759"/>
<dbReference type="PAN-GO" id="Q8NEQ5">
    <property type="GO annotations" value="0 GO annotations based on evolutionary models"/>
</dbReference>
<dbReference type="PhylomeDB" id="Q8NEQ5"/>
<dbReference type="TreeFam" id="TF338377"/>
<dbReference type="PathwayCommons" id="Q8NEQ5"/>
<dbReference type="SignaLink" id="Q8NEQ5"/>
<dbReference type="BioGRID-ORCS" id="128346">
    <property type="hits" value="11 hits in 1148 CRISPR screens"/>
</dbReference>
<dbReference type="ChiTaRS" id="C1orf162">
    <property type="organism name" value="human"/>
</dbReference>
<dbReference type="GenomeRNAi" id="128346"/>
<dbReference type="Pharos" id="Q8NEQ5">
    <property type="development level" value="Tdark"/>
</dbReference>
<dbReference type="PRO" id="PR:Q8NEQ5"/>
<dbReference type="Proteomes" id="UP000005640">
    <property type="component" value="Chromosome 1"/>
</dbReference>
<dbReference type="RNAct" id="Q8NEQ5">
    <property type="molecule type" value="protein"/>
</dbReference>
<dbReference type="Bgee" id="ENSG00000143110">
    <property type="expression patterns" value="Expressed in granulocyte and 152 other cell types or tissues"/>
</dbReference>
<dbReference type="GO" id="GO:0016020">
    <property type="term" value="C:membrane"/>
    <property type="evidence" value="ECO:0007669"/>
    <property type="project" value="UniProtKB-SubCell"/>
</dbReference>
<dbReference type="InterPro" id="IPR037763">
    <property type="entry name" value="C1orf162"/>
</dbReference>
<dbReference type="PANTHER" id="PTHR37997">
    <property type="entry name" value="TRANSMEMBRANE PROTEIN C1ORF162"/>
    <property type="match status" value="1"/>
</dbReference>
<dbReference type="PANTHER" id="PTHR37997:SF1">
    <property type="entry name" value="TRANSMEMBRANE PROTEIN C1ORF162"/>
    <property type="match status" value="1"/>
</dbReference>
<reference key="1">
    <citation type="journal article" date="2006" name="Nature">
        <title>The DNA sequence and biological annotation of human chromosome 1.</title>
        <authorList>
            <person name="Gregory S.G."/>
            <person name="Barlow K.F."/>
            <person name="McLay K.E."/>
            <person name="Kaul R."/>
            <person name="Swarbreck D."/>
            <person name="Dunham A."/>
            <person name="Scott C.E."/>
            <person name="Howe K.L."/>
            <person name="Woodfine K."/>
            <person name="Spencer C.C.A."/>
            <person name="Jones M.C."/>
            <person name="Gillson C."/>
            <person name="Searle S."/>
            <person name="Zhou Y."/>
            <person name="Kokocinski F."/>
            <person name="McDonald L."/>
            <person name="Evans R."/>
            <person name="Phillips K."/>
            <person name="Atkinson A."/>
            <person name="Cooper R."/>
            <person name="Jones C."/>
            <person name="Hall R.E."/>
            <person name="Andrews T.D."/>
            <person name="Lloyd C."/>
            <person name="Ainscough R."/>
            <person name="Almeida J.P."/>
            <person name="Ambrose K.D."/>
            <person name="Anderson F."/>
            <person name="Andrew R.W."/>
            <person name="Ashwell R.I.S."/>
            <person name="Aubin K."/>
            <person name="Babbage A.K."/>
            <person name="Bagguley C.L."/>
            <person name="Bailey J."/>
            <person name="Beasley H."/>
            <person name="Bethel G."/>
            <person name="Bird C.P."/>
            <person name="Bray-Allen S."/>
            <person name="Brown J.Y."/>
            <person name="Brown A.J."/>
            <person name="Buckley D."/>
            <person name="Burton J."/>
            <person name="Bye J."/>
            <person name="Carder C."/>
            <person name="Chapman J.C."/>
            <person name="Clark S.Y."/>
            <person name="Clarke G."/>
            <person name="Clee C."/>
            <person name="Cobley V."/>
            <person name="Collier R.E."/>
            <person name="Corby N."/>
            <person name="Coville G.J."/>
            <person name="Davies J."/>
            <person name="Deadman R."/>
            <person name="Dunn M."/>
            <person name="Earthrowl M."/>
            <person name="Ellington A.G."/>
            <person name="Errington H."/>
            <person name="Frankish A."/>
            <person name="Frankland J."/>
            <person name="French L."/>
            <person name="Garner P."/>
            <person name="Garnett J."/>
            <person name="Gay L."/>
            <person name="Ghori M.R.J."/>
            <person name="Gibson R."/>
            <person name="Gilby L.M."/>
            <person name="Gillett W."/>
            <person name="Glithero R.J."/>
            <person name="Grafham D.V."/>
            <person name="Griffiths C."/>
            <person name="Griffiths-Jones S."/>
            <person name="Grocock R."/>
            <person name="Hammond S."/>
            <person name="Harrison E.S.I."/>
            <person name="Hart E."/>
            <person name="Haugen E."/>
            <person name="Heath P.D."/>
            <person name="Holmes S."/>
            <person name="Holt K."/>
            <person name="Howden P.J."/>
            <person name="Hunt A.R."/>
            <person name="Hunt S.E."/>
            <person name="Hunter G."/>
            <person name="Isherwood J."/>
            <person name="James R."/>
            <person name="Johnson C."/>
            <person name="Johnson D."/>
            <person name="Joy A."/>
            <person name="Kay M."/>
            <person name="Kershaw J.K."/>
            <person name="Kibukawa M."/>
            <person name="Kimberley A.M."/>
            <person name="King A."/>
            <person name="Knights A.J."/>
            <person name="Lad H."/>
            <person name="Laird G."/>
            <person name="Lawlor S."/>
            <person name="Leongamornlert D.A."/>
            <person name="Lloyd D.M."/>
            <person name="Loveland J."/>
            <person name="Lovell J."/>
            <person name="Lush M.J."/>
            <person name="Lyne R."/>
            <person name="Martin S."/>
            <person name="Mashreghi-Mohammadi M."/>
            <person name="Matthews L."/>
            <person name="Matthews N.S.W."/>
            <person name="McLaren S."/>
            <person name="Milne S."/>
            <person name="Mistry S."/>
            <person name="Moore M.J.F."/>
            <person name="Nickerson T."/>
            <person name="O'Dell C.N."/>
            <person name="Oliver K."/>
            <person name="Palmeiri A."/>
            <person name="Palmer S.A."/>
            <person name="Parker A."/>
            <person name="Patel D."/>
            <person name="Pearce A.V."/>
            <person name="Peck A.I."/>
            <person name="Pelan S."/>
            <person name="Phelps K."/>
            <person name="Phillimore B.J."/>
            <person name="Plumb R."/>
            <person name="Rajan J."/>
            <person name="Raymond C."/>
            <person name="Rouse G."/>
            <person name="Saenphimmachak C."/>
            <person name="Sehra H.K."/>
            <person name="Sheridan E."/>
            <person name="Shownkeen R."/>
            <person name="Sims S."/>
            <person name="Skuce C.D."/>
            <person name="Smith M."/>
            <person name="Steward C."/>
            <person name="Subramanian S."/>
            <person name="Sycamore N."/>
            <person name="Tracey A."/>
            <person name="Tromans A."/>
            <person name="Van Helmond Z."/>
            <person name="Wall M."/>
            <person name="Wallis J.M."/>
            <person name="White S."/>
            <person name="Whitehead S.L."/>
            <person name="Wilkinson J.E."/>
            <person name="Willey D.L."/>
            <person name="Williams H."/>
            <person name="Wilming L."/>
            <person name="Wray P.W."/>
            <person name="Wu Z."/>
            <person name="Coulson A."/>
            <person name="Vaudin M."/>
            <person name="Sulston J.E."/>
            <person name="Durbin R.M."/>
            <person name="Hubbard T."/>
            <person name="Wooster R."/>
            <person name="Dunham I."/>
            <person name="Carter N.P."/>
            <person name="McVean G."/>
            <person name="Ross M.T."/>
            <person name="Harrow J."/>
            <person name="Olson M.V."/>
            <person name="Beck S."/>
            <person name="Rogers J."/>
            <person name="Bentley D.R."/>
        </authorList>
    </citation>
    <scope>NUCLEOTIDE SEQUENCE [LARGE SCALE GENOMIC DNA]</scope>
</reference>
<reference key="2">
    <citation type="journal article" date="2004" name="Genome Res.">
        <title>The status, quality, and expansion of the NIH full-length cDNA project: the Mammalian Gene Collection (MGC).</title>
        <authorList>
            <consortium name="The MGC Project Team"/>
        </authorList>
    </citation>
    <scope>NUCLEOTIDE SEQUENCE [LARGE SCALE MRNA] (ISOFORMS 1 AND 2)</scope>
    <source>
        <tissue>Lung</tissue>
    </source>
</reference>
<comment type="subcellular location">
    <subcellularLocation>
        <location evidence="5">Membrane</location>
        <topology evidence="5">Single-pass membrane protein</topology>
    </subcellularLocation>
</comment>
<comment type="alternative products">
    <event type="alternative splicing"/>
    <isoform>
        <id>Q8NEQ5-1</id>
        <name>1</name>
        <sequence type="displayed"/>
    </isoform>
    <isoform>
        <id>Q8NEQ5-2</id>
        <name>2</name>
        <sequence type="described" ref="VSP_028124"/>
    </isoform>
</comment>
<name>CA162_HUMAN</name>
<evidence type="ECO:0000250" key="1">
    <source>
        <dbReference type="UniProtKB" id="Q3U7U4"/>
    </source>
</evidence>
<evidence type="ECO:0000255" key="2"/>
<evidence type="ECO:0000256" key="3">
    <source>
        <dbReference type="SAM" id="MobiDB-lite"/>
    </source>
</evidence>
<evidence type="ECO:0000303" key="4">
    <source>
    </source>
</evidence>
<evidence type="ECO:0000305" key="5"/>
<feature type="chain" id="PRO_0000304787" description="Transmembrane protein C1orf162">
    <location>
        <begin position="1"/>
        <end position="155"/>
    </location>
</feature>
<feature type="transmembrane region" description="Helical" evidence="2">
    <location>
        <begin position="41"/>
        <end position="61"/>
    </location>
</feature>
<feature type="region of interest" description="Disordered" evidence="3">
    <location>
        <begin position="1"/>
        <end position="28"/>
    </location>
</feature>
<feature type="region of interest" description="Disordered" evidence="3">
    <location>
        <begin position="92"/>
        <end position="114"/>
    </location>
</feature>
<feature type="compositionally biased region" description="Low complexity" evidence="3">
    <location>
        <begin position="19"/>
        <end position="28"/>
    </location>
</feature>
<feature type="modified residue" description="Phosphoserine" evidence="1">
    <location>
        <position position="140"/>
    </location>
</feature>
<feature type="splice variant" id="VSP_028124" description="In isoform 2." evidence="4">
    <location>
        <begin position="69"/>
        <end position="93"/>
    </location>
</feature>
<feature type="sequence variant" id="VAR_035106" description="In dbSNP:rs6703267.">
    <original>G</original>
    <variation>S</variation>
    <location>
        <position position="3"/>
    </location>
</feature>